<feature type="chain" id="PRO_0000165489" description="Holliday junction branch migration complex subunit RuvB">
    <location>
        <begin position="1"/>
        <end position="333"/>
    </location>
</feature>
<feature type="region of interest" description="Large ATPase domain (RuvB-L)" evidence="1">
    <location>
        <begin position="1"/>
        <end position="182"/>
    </location>
</feature>
<feature type="region of interest" description="Small ATPAse domain (RuvB-S)" evidence="1">
    <location>
        <begin position="183"/>
        <end position="253"/>
    </location>
</feature>
<feature type="region of interest" description="Head domain (RuvB-H)" evidence="1">
    <location>
        <begin position="256"/>
        <end position="333"/>
    </location>
</feature>
<feature type="binding site" evidence="1">
    <location>
        <position position="21"/>
    </location>
    <ligand>
        <name>ATP</name>
        <dbReference type="ChEBI" id="CHEBI:30616"/>
    </ligand>
</feature>
<feature type="binding site" evidence="1">
    <location>
        <position position="22"/>
    </location>
    <ligand>
        <name>ATP</name>
        <dbReference type="ChEBI" id="CHEBI:30616"/>
    </ligand>
</feature>
<feature type="binding site" evidence="1">
    <location>
        <position position="63"/>
    </location>
    <ligand>
        <name>ATP</name>
        <dbReference type="ChEBI" id="CHEBI:30616"/>
    </ligand>
</feature>
<feature type="binding site" evidence="1">
    <location>
        <position position="66"/>
    </location>
    <ligand>
        <name>ATP</name>
        <dbReference type="ChEBI" id="CHEBI:30616"/>
    </ligand>
</feature>
<feature type="binding site" evidence="1">
    <location>
        <position position="67"/>
    </location>
    <ligand>
        <name>ATP</name>
        <dbReference type="ChEBI" id="CHEBI:30616"/>
    </ligand>
</feature>
<feature type="binding site" evidence="1">
    <location>
        <position position="67"/>
    </location>
    <ligand>
        <name>Mg(2+)</name>
        <dbReference type="ChEBI" id="CHEBI:18420"/>
    </ligand>
</feature>
<feature type="binding site" evidence="1">
    <location>
        <position position="68"/>
    </location>
    <ligand>
        <name>ATP</name>
        <dbReference type="ChEBI" id="CHEBI:30616"/>
    </ligand>
</feature>
<feature type="binding site" evidence="1">
    <location>
        <begin position="129"/>
        <end position="131"/>
    </location>
    <ligand>
        <name>ATP</name>
        <dbReference type="ChEBI" id="CHEBI:30616"/>
    </ligand>
</feature>
<feature type="binding site" evidence="1">
    <location>
        <position position="172"/>
    </location>
    <ligand>
        <name>ATP</name>
        <dbReference type="ChEBI" id="CHEBI:30616"/>
    </ligand>
</feature>
<feature type="binding site" evidence="1">
    <location>
        <position position="182"/>
    </location>
    <ligand>
        <name>ATP</name>
        <dbReference type="ChEBI" id="CHEBI:30616"/>
    </ligand>
</feature>
<feature type="binding site" evidence="1">
    <location>
        <position position="219"/>
    </location>
    <ligand>
        <name>ATP</name>
        <dbReference type="ChEBI" id="CHEBI:30616"/>
    </ligand>
</feature>
<feature type="binding site" evidence="1">
    <location>
        <position position="311"/>
    </location>
    <ligand>
        <name>DNA</name>
        <dbReference type="ChEBI" id="CHEBI:16991"/>
    </ligand>
</feature>
<feature type="binding site" evidence="1">
    <location>
        <position position="316"/>
    </location>
    <ligand>
        <name>DNA</name>
        <dbReference type="ChEBI" id="CHEBI:16991"/>
    </ligand>
</feature>
<reference key="1">
    <citation type="journal article" date="2000" name="Nucleic Acids Res.">
        <title>Complete genome sequence of the alkaliphilic bacterium Bacillus halodurans and genomic sequence comparison with Bacillus subtilis.</title>
        <authorList>
            <person name="Takami H."/>
            <person name="Nakasone K."/>
            <person name="Takaki Y."/>
            <person name="Maeno G."/>
            <person name="Sasaki R."/>
            <person name="Masui N."/>
            <person name="Fuji F."/>
            <person name="Hirama C."/>
            <person name="Nakamura Y."/>
            <person name="Ogasawara N."/>
            <person name="Kuhara S."/>
            <person name="Horikoshi K."/>
        </authorList>
    </citation>
    <scope>NUCLEOTIDE SEQUENCE [LARGE SCALE GENOMIC DNA]</scope>
    <source>
        <strain>ATCC BAA-125 / DSM 18197 / FERM 7344 / JCM 9153 / C-125</strain>
    </source>
</reference>
<dbReference type="EC" id="3.6.4.-" evidence="1"/>
<dbReference type="EMBL" id="BA000004">
    <property type="protein sequence ID" value="BAB04944.1"/>
    <property type="status" value="ALT_INIT"/>
    <property type="molecule type" value="Genomic_DNA"/>
</dbReference>
<dbReference type="PIR" id="A83803">
    <property type="entry name" value="A83803"/>
</dbReference>
<dbReference type="RefSeq" id="WP_041820404.1">
    <property type="nucleotide sequence ID" value="NC_002570.2"/>
</dbReference>
<dbReference type="SMR" id="Q9KDI8"/>
<dbReference type="STRING" id="272558.gene:10727119"/>
<dbReference type="KEGG" id="bha:BH1225"/>
<dbReference type="eggNOG" id="COG2255">
    <property type="taxonomic scope" value="Bacteria"/>
</dbReference>
<dbReference type="HOGENOM" id="CLU_055599_0_0_9"/>
<dbReference type="OrthoDB" id="9804478at2"/>
<dbReference type="Proteomes" id="UP000001258">
    <property type="component" value="Chromosome"/>
</dbReference>
<dbReference type="GO" id="GO:0005737">
    <property type="term" value="C:cytoplasm"/>
    <property type="evidence" value="ECO:0007669"/>
    <property type="project" value="UniProtKB-SubCell"/>
</dbReference>
<dbReference type="GO" id="GO:0048476">
    <property type="term" value="C:Holliday junction resolvase complex"/>
    <property type="evidence" value="ECO:0007669"/>
    <property type="project" value="UniProtKB-UniRule"/>
</dbReference>
<dbReference type="GO" id="GO:0005524">
    <property type="term" value="F:ATP binding"/>
    <property type="evidence" value="ECO:0007669"/>
    <property type="project" value="UniProtKB-UniRule"/>
</dbReference>
<dbReference type="GO" id="GO:0016887">
    <property type="term" value="F:ATP hydrolysis activity"/>
    <property type="evidence" value="ECO:0007669"/>
    <property type="project" value="InterPro"/>
</dbReference>
<dbReference type="GO" id="GO:0000400">
    <property type="term" value="F:four-way junction DNA binding"/>
    <property type="evidence" value="ECO:0007669"/>
    <property type="project" value="UniProtKB-UniRule"/>
</dbReference>
<dbReference type="GO" id="GO:0009378">
    <property type="term" value="F:four-way junction helicase activity"/>
    <property type="evidence" value="ECO:0007669"/>
    <property type="project" value="InterPro"/>
</dbReference>
<dbReference type="GO" id="GO:0006310">
    <property type="term" value="P:DNA recombination"/>
    <property type="evidence" value="ECO:0007669"/>
    <property type="project" value="UniProtKB-UniRule"/>
</dbReference>
<dbReference type="GO" id="GO:0006281">
    <property type="term" value="P:DNA repair"/>
    <property type="evidence" value="ECO:0007669"/>
    <property type="project" value="UniProtKB-UniRule"/>
</dbReference>
<dbReference type="CDD" id="cd00009">
    <property type="entry name" value="AAA"/>
    <property type="match status" value="1"/>
</dbReference>
<dbReference type="FunFam" id="3.40.50.300:FF:000073">
    <property type="entry name" value="Holliday junction ATP-dependent DNA helicase RuvB"/>
    <property type="match status" value="1"/>
</dbReference>
<dbReference type="Gene3D" id="1.10.8.60">
    <property type="match status" value="1"/>
</dbReference>
<dbReference type="Gene3D" id="3.40.50.300">
    <property type="entry name" value="P-loop containing nucleotide triphosphate hydrolases"/>
    <property type="match status" value="1"/>
</dbReference>
<dbReference type="Gene3D" id="1.10.10.10">
    <property type="entry name" value="Winged helix-like DNA-binding domain superfamily/Winged helix DNA-binding domain"/>
    <property type="match status" value="1"/>
</dbReference>
<dbReference type="HAMAP" id="MF_00016">
    <property type="entry name" value="DNA_HJ_migration_RuvB"/>
    <property type="match status" value="1"/>
</dbReference>
<dbReference type="InterPro" id="IPR003593">
    <property type="entry name" value="AAA+_ATPase"/>
</dbReference>
<dbReference type="InterPro" id="IPR041445">
    <property type="entry name" value="AAA_lid_4"/>
</dbReference>
<dbReference type="InterPro" id="IPR004605">
    <property type="entry name" value="DNA_helicase_Holl-junc_RuvB"/>
</dbReference>
<dbReference type="InterPro" id="IPR027417">
    <property type="entry name" value="P-loop_NTPase"/>
</dbReference>
<dbReference type="InterPro" id="IPR008824">
    <property type="entry name" value="RuvB-like_N"/>
</dbReference>
<dbReference type="InterPro" id="IPR008823">
    <property type="entry name" value="RuvB_C"/>
</dbReference>
<dbReference type="InterPro" id="IPR036388">
    <property type="entry name" value="WH-like_DNA-bd_sf"/>
</dbReference>
<dbReference type="InterPro" id="IPR036390">
    <property type="entry name" value="WH_DNA-bd_sf"/>
</dbReference>
<dbReference type="NCBIfam" id="NF000868">
    <property type="entry name" value="PRK00080.1"/>
    <property type="match status" value="1"/>
</dbReference>
<dbReference type="NCBIfam" id="TIGR00635">
    <property type="entry name" value="ruvB"/>
    <property type="match status" value="1"/>
</dbReference>
<dbReference type="PANTHER" id="PTHR42848">
    <property type="match status" value="1"/>
</dbReference>
<dbReference type="PANTHER" id="PTHR42848:SF1">
    <property type="entry name" value="HOLLIDAY JUNCTION BRANCH MIGRATION COMPLEX SUBUNIT RUVB"/>
    <property type="match status" value="1"/>
</dbReference>
<dbReference type="Pfam" id="PF17864">
    <property type="entry name" value="AAA_lid_4"/>
    <property type="match status" value="1"/>
</dbReference>
<dbReference type="Pfam" id="PF05491">
    <property type="entry name" value="RuvB_C"/>
    <property type="match status" value="1"/>
</dbReference>
<dbReference type="Pfam" id="PF05496">
    <property type="entry name" value="RuvB_N"/>
    <property type="match status" value="1"/>
</dbReference>
<dbReference type="SMART" id="SM00382">
    <property type="entry name" value="AAA"/>
    <property type="match status" value="1"/>
</dbReference>
<dbReference type="SUPFAM" id="SSF52540">
    <property type="entry name" value="P-loop containing nucleoside triphosphate hydrolases"/>
    <property type="match status" value="1"/>
</dbReference>
<dbReference type="SUPFAM" id="SSF46785">
    <property type="entry name" value="Winged helix' DNA-binding domain"/>
    <property type="match status" value="1"/>
</dbReference>
<proteinExistence type="inferred from homology"/>
<accession>Q9KDI8</accession>
<sequence>MEERMVSAEAQTEEAAVEQGIRPHSFEQYIGQEKVKQNLKVFIEAAKMREEALDHVLLYGPPGLGKTTLSTIIANELGVQMRTTSGPAIERPGDLAAILTALEPGDVLFIDEIHRLNRMVEEVLYPAMEDYCIDIVIGKGPTARSVRLDLPPFTLVGATTRAGMLSSPLRDRFGVMARLEYYNVEELTTIIERTATIFDTELERDASIEIARRSRGTPRIANRLLRRVRDFAQVSGDMRISSSRAIESLERLQVDRLGLDHIDHKLIKGIMTKFNGGPVGLETISATIGEETDTIEEVYEPYLLQIGFLQRTPRGRVVTPLAYEHFNMEVPNK</sequence>
<keyword id="KW-0067">ATP-binding</keyword>
<keyword id="KW-0963">Cytoplasm</keyword>
<keyword id="KW-0227">DNA damage</keyword>
<keyword id="KW-0233">DNA recombination</keyword>
<keyword id="KW-0234">DNA repair</keyword>
<keyword id="KW-0238">DNA-binding</keyword>
<keyword id="KW-0378">Hydrolase</keyword>
<keyword id="KW-0547">Nucleotide-binding</keyword>
<keyword id="KW-1185">Reference proteome</keyword>
<organism>
    <name type="scientific">Halalkalibacterium halodurans (strain ATCC BAA-125 / DSM 18197 / FERM 7344 / JCM 9153 / C-125)</name>
    <name type="common">Bacillus halodurans</name>
    <dbReference type="NCBI Taxonomy" id="272558"/>
    <lineage>
        <taxon>Bacteria</taxon>
        <taxon>Bacillati</taxon>
        <taxon>Bacillota</taxon>
        <taxon>Bacilli</taxon>
        <taxon>Bacillales</taxon>
        <taxon>Bacillaceae</taxon>
        <taxon>Halalkalibacterium (ex Joshi et al. 2022)</taxon>
    </lineage>
</organism>
<gene>
    <name evidence="1" type="primary">ruvB</name>
    <name type="ordered locus">BH1225</name>
</gene>
<protein>
    <recommendedName>
        <fullName evidence="1">Holliday junction branch migration complex subunit RuvB</fullName>
        <ecNumber evidence="1">3.6.4.-</ecNumber>
    </recommendedName>
</protein>
<evidence type="ECO:0000255" key="1">
    <source>
        <dbReference type="HAMAP-Rule" id="MF_00016"/>
    </source>
</evidence>
<evidence type="ECO:0000305" key="2"/>
<comment type="function">
    <text evidence="1">The RuvA-RuvB-RuvC complex processes Holliday junction (HJ) DNA during genetic recombination and DNA repair, while the RuvA-RuvB complex plays an important role in the rescue of blocked DNA replication forks via replication fork reversal (RFR). RuvA specifically binds to HJ cruciform DNA, conferring on it an open structure. The RuvB hexamer acts as an ATP-dependent pump, pulling dsDNA into and through the RuvAB complex. RuvB forms 2 homohexamers on either side of HJ DNA bound by 1 or 2 RuvA tetramers; 4 subunits per hexamer contact DNA at a time. Coordinated motions by a converter formed by DNA-disengaged RuvB subunits stimulates ATP hydrolysis and nucleotide exchange. Immobilization of the converter enables RuvB to convert the ATP-contained energy into a lever motion, pulling 2 nucleotides of DNA out of the RuvA tetramer per ATP hydrolyzed, thus driving DNA branch migration. The RuvB motors rotate together with the DNA substrate, which together with the progressing nucleotide cycle form the mechanistic basis for DNA recombination by continuous HJ branch migration. Branch migration allows RuvC to scan DNA until it finds its consensus sequence, where it cleaves and resolves cruciform DNA.</text>
</comment>
<comment type="catalytic activity">
    <reaction evidence="1">
        <text>ATP + H2O = ADP + phosphate + H(+)</text>
        <dbReference type="Rhea" id="RHEA:13065"/>
        <dbReference type="ChEBI" id="CHEBI:15377"/>
        <dbReference type="ChEBI" id="CHEBI:15378"/>
        <dbReference type="ChEBI" id="CHEBI:30616"/>
        <dbReference type="ChEBI" id="CHEBI:43474"/>
        <dbReference type="ChEBI" id="CHEBI:456216"/>
    </reaction>
</comment>
<comment type="subunit">
    <text evidence="1">Homohexamer. Forms an RuvA(8)-RuvB(12)-Holliday junction (HJ) complex. HJ DNA is sandwiched between 2 RuvA tetramers; dsDNA enters through RuvA and exits via RuvB. An RuvB hexamer assembles on each DNA strand where it exits the tetramer. Each RuvB hexamer is contacted by two RuvA subunits (via domain III) on 2 adjacent RuvB subunits; this complex drives branch migration. In the full resolvosome a probable DNA-RuvA(4)-RuvB(12)-RuvC(2) complex forms which resolves the HJ.</text>
</comment>
<comment type="subcellular location">
    <subcellularLocation>
        <location evidence="1">Cytoplasm</location>
    </subcellularLocation>
</comment>
<comment type="domain">
    <text evidence="1">Has 3 domains, the large (RuvB-L) and small ATPase (RuvB-S) domains and the C-terminal head (RuvB-H) domain. The head domain binds DNA, while the ATPase domains jointly bind ATP, ADP or are empty depending on the state of the subunit in the translocation cycle. During a single DNA translocation step the structure of each domain remains the same, but their relative positions change.</text>
</comment>
<comment type="similarity">
    <text evidence="1">Belongs to the RuvB family.</text>
</comment>
<comment type="sequence caution" evidence="2">
    <conflict type="erroneous initiation">
        <sequence resource="EMBL-CDS" id="BAB04944"/>
    </conflict>
    <text>Truncated N-terminus.</text>
</comment>
<name>RUVB_HALH5</name>